<reference key="1">
    <citation type="submission" date="2008-02" db="EMBL/GenBank/DDBJ databases">
        <title>Complete sequence of Shewanella woodyi ATCC 51908.</title>
        <authorList>
            <consortium name="US DOE Joint Genome Institute"/>
            <person name="Copeland A."/>
            <person name="Lucas S."/>
            <person name="Lapidus A."/>
            <person name="Glavina del Rio T."/>
            <person name="Dalin E."/>
            <person name="Tice H."/>
            <person name="Bruce D."/>
            <person name="Goodwin L."/>
            <person name="Pitluck S."/>
            <person name="Sims D."/>
            <person name="Brettin T."/>
            <person name="Detter J.C."/>
            <person name="Han C."/>
            <person name="Kuske C.R."/>
            <person name="Schmutz J."/>
            <person name="Larimer F."/>
            <person name="Land M."/>
            <person name="Hauser L."/>
            <person name="Kyrpides N."/>
            <person name="Lykidis A."/>
            <person name="Zhao J.-S."/>
            <person name="Richardson P."/>
        </authorList>
    </citation>
    <scope>NUCLEOTIDE SEQUENCE [LARGE SCALE GENOMIC DNA]</scope>
    <source>
        <strain>ATCC 51908 / MS32</strain>
    </source>
</reference>
<gene>
    <name evidence="1" type="primary">dapF</name>
    <name type="ordered locus">Swoo_0487</name>
</gene>
<accession>B1KQD0</accession>
<protein>
    <recommendedName>
        <fullName evidence="1">Diaminopimelate epimerase</fullName>
        <shortName evidence="1">DAP epimerase</shortName>
        <ecNumber evidence="1">5.1.1.7</ecNumber>
    </recommendedName>
    <alternativeName>
        <fullName evidence="1">PLP-independent amino acid racemase</fullName>
    </alternativeName>
</protein>
<name>DAPF_SHEWM</name>
<organism>
    <name type="scientific">Shewanella woodyi (strain ATCC 51908 / MS32)</name>
    <dbReference type="NCBI Taxonomy" id="392500"/>
    <lineage>
        <taxon>Bacteria</taxon>
        <taxon>Pseudomonadati</taxon>
        <taxon>Pseudomonadota</taxon>
        <taxon>Gammaproteobacteria</taxon>
        <taxon>Alteromonadales</taxon>
        <taxon>Shewanellaceae</taxon>
        <taxon>Shewanella</taxon>
    </lineage>
</organism>
<evidence type="ECO:0000255" key="1">
    <source>
        <dbReference type="HAMAP-Rule" id="MF_00197"/>
    </source>
</evidence>
<proteinExistence type="inferred from homology"/>
<dbReference type="EC" id="5.1.1.7" evidence="1"/>
<dbReference type="EMBL" id="CP000961">
    <property type="protein sequence ID" value="ACA84785.1"/>
    <property type="molecule type" value="Genomic_DNA"/>
</dbReference>
<dbReference type="RefSeq" id="WP_012323134.1">
    <property type="nucleotide sequence ID" value="NC_010506.1"/>
</dbReference>
<dbReference type="SMR" id="B1KQD0"/>
<dbReference type="STRING" id="392500.Swoo_0487"/>
<dbReference type="KEGG" id="swd:Swoo_0487"/>
<dbReference type="eggNOG" id="COG0253">
    <property type="taxonomic scope" value="Bacteria"/>
</dbReference>
<dbReference type="HOGENOM" id="CLU_053306_1_1_6"/>
<dbReference type="UniPathway" id="UPA00034">
    <property type="reaction ID" value="UER00025"/>
</dbReference>
<dbReference type="Proteomes" id="UP000002168">
    <property type="component" value="Chromosome"/>
</dbReference>
<dbReference type="GO" id="GO:0005829">
    <property type="term" value="C:cytosol"/>
    <property type="evidence" value="ECO:0007669"/>
    <property type="project" value="TreeGrafter"/>
</dbReference>
<dbReference type="GO" id="GO:0008837">
    <property type="term" value="F:diaminopimelate epimerase activity"/>
    <property type="evidence" value="ECO:0007669"/>
    <property type="project" value="UniProtKB-UniRule"/>
</dbReference>
<dbReference type="GO" id="GO:0009089">
    <property type="term" value="P:lysine biosynthetic process via diaminopimelate"/>
    <property type="evidence" value="ECO:0007669"/>
    <property type="project" value="UniProtKB-UniRule"/>
</dbReference>
<dbReference type="FunFam" id="3.10.310.10:FF:000001">
    <property type="entry name" value="Diaminopimelate epimerase"/>
    <property type="match status" value="1"/>
</dbReference>
<dbReference type="FunFam" id="3.10.310.10:FF:000002">
    <property type="entry name" value="Diaminopimelate epimerase"/>
    <property type="match status" value="1"/>
</dbReference>
<dbReference type="Gene3D" id="3.10.310.10">
    <property type="entry name" value="Diaminopimelate Epimerase, Chain A, domain 1"/>
    <property type="match status" value="2"/>
</dbReference>
<dbReference type="HAMAP" id="MF_00197">
    <property type="entry name" value="DAP_epimerase"/>
    <property type="match status" value="1"/>
</dbReference>
<dbReference type="InterPro" id="IPR018510">
    <property type="entry name" value="DAP_epimerase_AS"/>
</dbReference>
<dbReference type="InterPro" id="IPR001653">
    <property type="entry name" value="DAP_epimerase_DapF"/>
</dbReference>
<dbReference type="NCBIfam" id="TIGR00652">
    <property type="entry name" value="DapF"/>
    <property type="match status" value="1"/>
</dbReference>
<dbReference type="PANTHER" id="PTHR31689:SF0">
    <property type="entry name" value="DIAMINOPIMELATE EPIMERASE"/>
    <property type="match status" value="1"/>
</dbReference>
<dbReference type="PANTHER" id="PTHR31689">
    <property type="entry name" value="DIAMINOPIMELATE EPIMERASE, CHLOROPLASTIC"/>
    <property type="match status" value="1"/>
</dbReference>
<dbReference type="Pfam" id="PF01678">
    <property type="entry name" value="DAP_epimerase"/>
    <property type="match status" value="2"/>
</dbReference>
<dbReference type="SUPFAM" id="SSF54506">
    <property type="entry name" value="Diaminopimelate epimerase-like"/>
    <property type="match status" value="1"/>
</dbReference>
<dbReference type="PROSITE" id="PS01326">
    <property type="entry name" value="DAP_EPIMERASE"/>
    <property type="match status" value="1"/>
</dbReference>
<feature type="chain" id="PRO_1000099267" description="Diaminopimelate epimerase">
    <location>
        <begin position="1"/>
        <end position="279"/>
    </location>
</feature>
<feature type="active site" description="Proton donor" evidence="1">
    <location>
        <position position="74"/>
    </location>
</feature>
<feature type="active site" description="Proton acceptor" evidence="1">
    <location>
        <position position="222"/>
    </location>
</feature>
<feature type="binding site" evidence="1">
    <location>
        <position position="12"/>
    </location>
    <ligand>
        <name>substrate</name>
    </ligand>
</feature>
<feature type="binding site" evidence="1">
    <location>
        <position position="45"/>
    </location>
    <ligand>
        <name>substrate</name>
    </ligand>
</feature>
<feature type="binding site" evidence="1">
    <location>
        <position position="65"/>
    </location>
    <ligand>
        <name>substrate</name>
    </ligand>
</feature>
<feature type="binding site" evidence="1">
    <location>
        <begin position="75"/>
        <end position="76"/>
    </location>
    <ligand>
        <name>substrate</name>
    </ligand>
</feature>
<feature type="binding site" evidence="1">
    <location>
        <position position="162"/>
    </location>
    <ligand>
        <name>substrate</name>
    </ligand>
</feature>
<feature type="binding site" evidence="1">
    <location>
        <position position="195"/>
    </location>
    <ligand>
        <name>substrate</name>
    </ligand>
</feature>
<feature type="binding site" evidence="1">
    <location>
        <begin position="213"/>
        <end position="214"/>
    </location>
    <ligand>
        <name>substrate</name>
    </ligand>
</feature>
<feature type="binding site" evidence="1">
    <location>
        <begin position="223"/>
        <end position="224"/>
    </location>
    <ligand>
        <name>substrate</name>
    </ligand>
</feature>
<feature type="site" description="Could be important to modulate the pK values of the two catalytic cysteine residues" evidence="1">
    <location>
        <position position="164"/>
    </location>
</feature>
<feature type="site" description="Could be important to modulate the pK values of the two catalytic cysteine residues" evidence="1">
    <location>
        <position position="213"/>
    </location>
</feature>
<feature type="site" description="Important for dimerization" evidence="1">
    <location>
        <position position="273"/>
    </location>
</feature>
<keyword id="KW-0028">Amino-acid biosynthesis</keyword>
<keyword id="KW-0963">Cytoplasm</keyword>
<keyword id="KW-0413">Isomerase</keyword>
<keyword id="KW-0457">Lysine biosynthesis</keyword>
<keyword id="KW-1185">Reference proteome</keyword>
<sequence length="279" mass="30626">MIHFAKMHGLGNDFMVVDGVTQNVFFSPEQIKRLADRNFGVGFDQLLLVEPPYDPDLDFHYRIFNADGGEVEQCGNGARCFARFVRNKGLTNKHKIKVSTSNGKITLRLERDGNVTVNMGVPVLDPSKIPFNAKRVEKTYLLQTSSSHAMETFLCGAISMGNPHCVLEVEDIEHAEVERIGALLTQNERFPKGVNVGFMQVIDAGHIKLRVYERGAAETLACGTGACAAAAVGQLQGKLNKMVRVDLPGGTLTINWEGEGNPLWMTGPAEHVYDGQIPQ</sequence>
<comment type="function">
    <text evidence="1">Catalyzes the stereoinversion of LL-2,6-diaminopimelate (L,L-DAP) to meso-diaminopimelate (meso-DAP), a precursor of L-lysine and an essential component of the bacterial peptidoglycan.</text>
</comment>
<comment type="catalytic activity">
    <reaction evidence="1">
        <text>(2S,6S)-2,6-diaminopimelate = meso-2,6-diaminopimelate</text>
        <dbReference type="Rhea" id="RHEA:15393"/>
        <dbReference type="ChEBI" id="CHEBI:57609"/>
        <dbReference type="ChEBI" id="CHEBI:57791"/>
        <dbReference type="EC" id="5.1.1.7"/>
    </reaction>
</comment>
<comment type="pathway">
    <text evidence="1">Amino-acid biosynthesis; L-lysine biosynthesis via DAP pathway; DL-2,6-diaminopimelate from LL-2,6-diaminopimelate: step 1/1.</text>
</comment>
<comment type="subunit">
    <text evidence="1">Homodimer.</text>
</comment>
<comment type="subcellular location">
    <subcellularLocation>
        <location evidence="1">Cytoplasm</location>
    </subcellularLocation>
</comment>
<comment type="similarity">
    <text evidence="1">Belongs to the diaminopimelate epimerase family.</text>
</comment>